<protein>
    <recommendedName>
        <fullName evidence="2">Ribulose bisphosphate carboxylase large chain</fullName>
        <shortName evidence="2">RuBisCO large subunit</shortName>
        <ecNumber evidence="2">4.1.1.39</ecNumber>
    </recommendedName>
</protein>
<proteinExistence type="inferred from homology"/>
<comment type="function">
    <text evidence="2">RuBisCO catalyzes two reactions: the carboxylation of D-ribulose 1,5-bisphosphate, the primary event in carbon dioxide fixation, as well as the oxidative fragmentation of the pentose substrate in the photorespiration process. Both reactions occur simultaneously and in competition at the same active site.</text>
</comment>
<comment type="catalytic activity">
    <reaction evidence="2">
        <text>2 (2R)-3-phosphoglycerate + 2 H(+) = D-ribulose 1,5-bisphosphate + CO2 + H2O</text>
        <dbReference type="Rhea" id="RHEA:23124"/>
        <dbReference type="ChEBI" id="CHEBI:15377"/>
        <dbReference type="ChEBI" id="CHEBI:15378"/>
        <dbReference type="ChEBI" id="CHEBI:16526"/>
        <dbReference type="ChEBI" id="CHEBI:57870"/>
        <dbReference type="ChEBI" id="CHEBI:58272"/>
        <dbReference type="EC" id="4.1.1.39"/>
    </reaction>
</comment>
<comment type="catalytic activity">
    <reaction evidence="2">
        <text>D-ribulose 1,5-bisphosphate + O2 = 2-phosphoglycolate + (2R)-3-phosphoglycerate + 2 H(+)</text>
        <dbReference type="Rhea" id="RHEA:36631"/>
        <dbReference type="ChEBI" id="CHEBI:15378"/>
        <dbReference type="ChEBI" id="CHEBI:15379"/>
        <dbReference type="ChEBI" id="CHEBI:57870"/>
        <dbReference type="ChEBI" id="CHEBI:58033"/>
        <dbReference type="ChEBI" id="CHEBI:58272"/>
    </reaction>
</comment>
<comment type="cofactor">
    <cofactor evidence="2">
        <name>Mg(2+)</name>
        <dbReference type="ChEBI" id="CHEBI:18420"/>
    </cofactor>
    <text evidence="2">Binds 1 Mg(2+) ion per subunit.</text>
</comment>
<comment type="subunit">
    <text evidence="2">Heterohexadecamer of 8 large chains and 8 small chains; disulfide-linked. The disulfide link is formed within the large subunit homodimers.</text>
</comment>
<comment type="subcellular location">
    <subcellularLocation>
        <location>Plastid</location>
        <location>Chloroplast</location>
    </subcellularLocation>
</comment>
<comment type="PTM">
    <text evidence="2">The disulfide bond which can form in the large chain dimeric partners within the hexadecamer appears to be associated with oxidative stress and protein turnover.</text>
</comment>
<comment type="miscellaneous">
    <text evidence="2">The basic functional RuBisCO is composed of a large chain homodimer in a 'head-to-tail' conformation. In form I RuBisCO this homodimer is arranged in a barrel-like tetramer with the small subunits forming a tetrameric 'cap' on each end of the 'barrel'.</text>
</comment>
<comment type="similarity">
    <text evidence="2">Belongs to the RuBisCO large chain family. Type I subfamily.</text>
</comment>
<name>RBL_BRAOL</name>
<evidence type="ECO:0000250" key="1">
    <source>
        <dbReference type="UniProtKB" id="O03042"/>
    </source>
</evidence>
<evidence type="ECO:0000255" key="2">
    <source>
        <dbReference type="HAMAP-Rule" id="MF_01338"/>
    </source>
</evidence>
<keyword id="KW-0113">Calvin cycle</keyword>
<keyword id="KW-0120">Carbon dioxide fixation</keyword>
<keyword id="KW-0150">Chloroplast</keyword>
<keyword id="KW-1015">Disulfide bond</keyword>
<keyword id="KW-0456">Lyase</keyword>
<keyword id="KW-0460">Magnesium</keyword>
<keyword id="KW-0479">Metal-binding</keyword>
<keyword id="KW-0503">Monooxygenase</keyword>
<keyword id="KW-0560">Oxidoreductase</keyword>
<keyword id="KW-0597">Phosphoprotein</keyword>
<keyword id="KW-0601">Photorespiration</keyword>
<keyword id="KW-0602">Photosynthesis</keyword>
<keyword id="KW-0934">Plastid</keyword>
<organism>
    <name type="scientific">Brassica oleracea</name>
    <name type="common">Wild cabbage</name>
    <dbReference type="NCBI Taxonomy" id="3712"/>
    <lineage>
        <taxon>Eukaryota</taxon>
        <taxon>Viridiplantae</taxon>
        <taxon>Streptophyta</taxon>
        <taxon>Embryophyta</taxon>
        <taxon>Tracheophyta</taxon>
        <taxon>Spermatophyta</taxon>
        <taxon>Magnoliopsida</taxon>
        <taxon>eudicotyledons</taxon>
        <taxon>Gunneridae</taxon>
        <taxon>Pentapetalae</taxon>
        <taxon>rosids</taxon>
        <taxon>malvids</taxon>
        <taxon>Brassicales</taxon>
        <taxon>Brassicaceae</taxon>
        <taxon>Brassiceae</taxon>
        <taxon>Brassica</taxon>
    </lineage>
</organism>
<reference key="1">
    <citation type="submission" date="1992-03" db="EMBL/GenBank/DDBJ databases">
        <authorList>
            <person name="Manhart J.R."/>
        </authorList>
    </citation>
    <scope>NUCLEOTIDE SEQUENCE [GENOMIC DNA]</scope>
</reference>
<geneLocation type="chloroplast"/>
<gene>
    <name evidence="2" type="primary">rbcL</name>
</gene>
<feature type="propeptide" id="PRO_0000031143" evidence="2">
    <location>
        <begin position="1"/>
        <end position="2"/>
    </location>
</feature>
<feature type="chain" id="PRO_0000031144" description="Ribulose bisphosphate carboxylase large chain">
    <location>
        <begin position="3"/>
        <end position="479"/>
    </location>
</feature>
<feature type="active site" description="Proton acceptor" evidence="2">
    <location>
        <position position="175"/>
    </location>
</feature>
<feature type="active site" description="Proton acceptor" evidence="2">
    <location>
        <position position="294"/>
    </location>
</feature>
<feature type="binding site" description="in homodimeric partner" evidence="2">
    <location>
        <position position="123"/>
    </location>
    <ligand>
        <name>substrate</name>
    </ligand>
</feature>
<feature type="binding site" evidence="2">
    <location>
        <position position="173"/>
    </location>
    <ligand>
        <name>substrate</name>
    </ligand>
</feature>
<feature type="binding site" evidence="2">
    <location>
        <position position="177"/>
    </location>
    <ligand>
        <name>substrate</name>
    </ligand>
</feature>
<feature type="binding site" description="via carbamate group" evidence="2">
    <location>
        <position position="201"/>
    </location>
    <ligand>
        <name>Mg(2+)</name>
        <dbReference type="ChEBI" id="CHEBI:18420"/>
    </ligand>
</feature>
<feature type="binding site" evidence="2">
    <location>
        <position position="203"/>
    </location>
    <ligand>
        <name>Mg(2+)</name>
        <dbReference type="ChEBI" id="CHEBI:18420"/>
    </ligand>
</feature>
<feature type="binding site" evidence="2">
    <location>
        <position position="204"/>
    </location>
    <ligand>
        <name>Mg(2+)</name>
        <dbReference type="ChEBI" id="CHEBI:18420"/>
    </ligand>
</feature>
<feature type="binding site" evidence="2">
    <location>
        <position position="295"/>
    </location>
    <ligand>
        <name>substrate</name>
    </ligand>
</feature>
<feature type="binding site" evidence="2">
    <location>
        <position position="327"/>
    </location>
    <ligand>
        <name>substrate</name>
    </ligand>
</feature>
<feature type="binding site" evidence="2">
    <location>
        <position position="379"/>
    </location>
    <ligand>
        <name>substrate</name>
    </ligand>
</feature>
<feature type="site" description="Transition state stabilizer" evidence="2">
    <location>
        <position position="334"/>
    </location>
</feature>
<feature type="modified residue" description="N6-carboxylysine" evidence="2">
    <location>
        <position position="201"/>
    </location>
</feature>
<feature type="modified residue" description="Phosphoserine" evidence="1">
    <location>
        <position position="208"/>
    </location>
</feature>
<feature type="modified residue" description="Phosphothreonine" evidence="1">
    <location>
        <position position="330"/>
    </location>
</feature>
<feature type="disulfide bond" description="Interchain; in linked form" evidence="2">
    <location>
        <position position="247"/>
    </location>
</feature>
<dbReference type="EC" id="4.1.1.39" evidence="2"/>
<dbReference type="EMBL" id="M88342">
    <property type="protein sequence ID" value="AAB01599.1"/>
    <property type="molecule type" value="Genomic_DNA"/>
</dbReference>
<dbReference type="RefSeq" id="YP_009564583.1">
    <property type="nucleotide sequence ID" value="NC_041167.1"/>
</dbReference>
<dbReference type="SMR" id="P48686"/>
<dbReference type="GeneID" id="39337862"/>
<dbReference type="GO" id="GO:0009507">
    <property type="term" value="C:chloroplast"/>
    <property type="evidence" value="ECO:0007669"/>
    <property type="project" value="UniProtKB-SubCell"/>
</dbReference>
<dbReference type="GO" id="GO:0000287">
    <property type="term" value="F:magnesium ion binding"/>
    <property type="evidence" value="ECO:0007669"/>
    <property type="project" value="UniProtKB-UniRule"/>
</dbReference>
<dbReference type="GO" id="GO:0004497">
    <property type="term" value="F:monooxygenase activity"/>
    <property type="evidence" value="ECO:0007669"/>
    <property type="project" value="UniProtKB-KW"/>
</dbReference>
<dbReference type="GO" id="GO:0016984">
    <property type="term" value="F:ribulose-bisphosphate carboxylase activity"/>
    <property type="evidence" value="ECO:0007669"/>
    <property type="project" value="UniProtKB-UniRule"/>
</dbReference>
<dbReference type="GO" id="GO:0009853">
    <property type="term" value="P:photorespiration"/>
    <property type="evidence" value="ECO:0007669"/>
    <property type="project" value="UniProtKB-KW"/>
</dbReference>
<dbReference type="GO" id="GO:0019253">
    <property type="term" value="P:reductive pentose-phosphate cycle"/>
    <property type="evidence" value="ECO:0007669"/>
    <property type="project" value="UniProtKB-UniRule"/>
</dbReference>
<dbReference type="CDD" id="cd08212">
    <property type="entry name" value="RuBisCO_large_I"/>
    <property type="match status" value="1"/>
</dbReference>
<dbReference type="FunFam" id="3.20.20.110:FF:000001">
    <property type="entry name" value="Ribulose bisphosphate carboxylase large chain"/>
    <property type="match status" value="1"/>
</dbReference>
<dbReference type="FunFam" id="3.30.70.150:FF:000001">
    <property type="entry name" value="Ribulose bisphosphate carboxylase large chain"/>
    <property type="match status" value="1"/>
</dbReference>
<dbReference type="Gene3D" id="3.20.20.110">
    <property type="entry name" value="Ribulose bisphosphate carboxylase, large subunit, C-terminal domain"/>
    <property type="match status" value="1"/>
</dbReference>
<dbReference type="Gene3D" id="3.30.70.150">
    <property type="entry name" value="RuBisCO large subunit, N-terminal domain"/>
    <property type="match status" value="1"/>
</dbReference>
<dbReference type="HAMAP" id="MF_01338">
    <property type="entry name" value="RuBisCO_L_type1"/>
    <property type="match status" value="1"/>
</dbReference>
<dbReference type="InterPro" id="IPR033966">
    <property type="entry name" value="RuBisCO"/>
</dbReference>
<dbReference type="InterPro" id="IPR020878">
    <property type="entry name" value="RuBisCo_large_chain_AS"/>
</dbReference>
<dbReference type="InterPro" id="IPR000685">
    <property type="entry name" value="RuBisCO_lsu_C"/>
</dbReference>
<dbReference type="InterPro" id="IPR036376">
    <property type="entry name" value="RuBisCO_lsu_C_sf"/>
</dbReference>
<dbReference type="InterPro" id="IPR017443">
    <property type="entry name" value="RuBisCO_lsu_fd_N"/>
</dbReference>
<dbReference type="InterPro" id="IPR036422">
    <property type="entry name" value="RuBisCO_lsu_N_sf"/>
</dbReference>
<dbReference type="InterPro" id="IPR020888">
    <property type="entry name" value="RuBisCO_lsuI"/>
</dbReference>
<dbReference type="NCBIfam" id="NF003252">
    <property type="entry name" value="PRK04208.1"/>
    <property type="match status" value="1"/>
</dbReference>
<dbReference type="PANTHER" id="PTHR42704">
    <property type="entry name" value="RIBULOSE BISPHOSPHATE CARBOXYLASE"/>
    <property type="match status" value="1"/>
</dbReference>
<dbReference type="PANTHER" id="PTHR42704:SF16">
    <property type="entry name" value="RIBULOSE BISPHOSPHATE CARBOXYLASE LARGE CHAIN"/>
    <property type="match status" value="1"/>
</dbReference>
<dbReference type="Pfam" id="PF00016">
    <property type="entry name" value="RuBisCO_large"/>
    <property type="match status" value="1"/>
</dbReference>
<dbReference type="Pfam" id="PF02788">
    <property type="entry name" value="RuBisCO_large_N"/>
    <property type="match status" value="1"/>
</dbReference>
<dbReference type="SFLD" id="SFLDG01052">
    <property type="entry name" value="RuBisCO"/>
    <property type="match status" value="1"/>
</dbReference>
<dbReference type="SFLD" id="SFLDS00014">
    <property type="entry name" value="RuBisCO"/>
    <property type="match status" value="1"/>
</dbReference>
<dbReference type="SFLD" id="SFLDG00301">
    <property type="entry name" value="RuBisCO-like_proteins"/>
    <property type="match status" value="1"/>
</dbReference>
<dbReference type="SUPFAM" id="SSF51649">
    <property type="entry name" value="RuBisCo, C-terminal domain"/>
    <property type="match status" value="1"/>
</dbReference>
<dbReference type="SUPFAM" id="SSF54966">
    <property type="entry name" value="RuBisCO, large subunit, small (N-terminal) domain"/>
    <property type="match status" value="1"/>
</dbReference>
<dbReference type="PROSITE" id="PS00157">
    <property type="entry name" value="RUBISCO_LARGE"/>
    <property type="match status" value="1"/>
</dbReference>
<accession>P48686</accession>
<sequence>MSPQTETKASVGFKAGVKEYKLNYYTPEYETKDTDILAAFRVTPQPGVPPEEAGAAVAAESSTGTWTTVWTDGLTSLDRYKGRCYHIEPVPGEETQFIAYVAYPLDLFEEGSVTNMFTSIVGNVFGFKALAALRLEDLRIPPAYTKTFQGPPHGIQVERDKLNKYGRPLLGCTIKPKLGLSAKNYGRAVYECLRGGLDFTKDDENVNSQPFMRWRDRFLFCAEAIYKSQAETGEIKGHYLNATAGTCEEMMKRAIFARELGVPIVMHDYLTGGFTANTSLAHYCRDNGLLLHIHRAMHAVIDRQKNHGMHFRVLAKALRLSGGDHVHAGTVVGKLEGDRESTLGFVDLLRDDYVEKDRSRGIFFTQDWVSLPGVLPVASGGIHVWHMPALTEIFGDDSVLQFGGGTLGHPWGNAPGAVANRVALEACVQARNEGRDLAVEGNEIIREACKWSPELAAACEVWKEITFNFPTIDKLDGQD</sequence>